<keyword id="KW-0119">Carbohydrate metabolism</keyword>
<keyword id="KW-0963">Cytoplasm</keyword>
<keyword id="KW-0903">Direct protein sequencing</keyword>
<keyword id="KW-0326">Glycosidase</keyword>
<keyword id="KW-0378">Hydrolase</keyword>
<feature type="initiator methionine" description="Removed" evidence="3">
    <location>
        <position position="1"/>
    </location>
</feature>
<feature type="chain" id="PRO_0000169872" description="Sucrose-6-phosphate hydrolase">
    <location>
        <begin position="2"/>
        <end position="466"/>
    </location>
</feature>
<feature type="active site" evidence="2">
    <location>
        <position position="41"/>
    </location>
</feature>
<feature type="binding site" evidence="1">
    <location>
        <begin position="38"/>
        <end position="41"/>
    </location>
    <ligand>
        <name>substrate</name>
    </ligand>
</feature>
<feature type="binding site" evidence="1">
    <location>
        <position position="57"/>
    </location>
    <ligand>
        <name>substrate</name>
    </ligand>
</feature>
<feature type="binding site" evidence="1">
    <location>
        <begin position="100"/>
        <end position="101"/>
    </location>
    <ligand>
        <name>substrate</name>
    </ligand>
</feature>
<feature type="binding site" evidence="1">
    <location>
        <begin position="159"/>
        <end position="160"/>
    </location>
    <ligand>
        <name>substrate</name>
    </ligand>
</feature>
<feature type="binding site" evidence="1">
    <location>
        <position position="218"/>
    </location>
    <ligand>
        <name>substrate</name>
    </ligand>
</feature>
<protein>
    <recommendedName>
        <fullName>Sucrose-6-phosphate hydrolase</fullName>
        <shortName>Sucrase</shortName>
        <ecNumber>3.2.1.26</ecNumber>
    </recommendedName>
    <alternativeName>
        <fullName>Invertase</fullName>
    </alternativeName>
</protein>
<reference key="1">
    <citation type="journal article" date="1996" name="Mol. Gen. Genet.">
        <title>Molecular analysis of the scrA and scrB genes from Klebsiella pneumoniae and plasmid pUR400, which encode the sucrose transport protein Enzyme II Scr of the phosphotransferase system and a sucrose-6-phosphate invertase.</title>
        <authorList>
            <person name="Titgemeyer F."/>
            <person name="Jahreis K."/>
            <person name="Ebner R."/>
            <person name="Lengeler J.W."/>
        </authorList>
    </citation>
    <scope>NUCLEOTIDE SEQUENCE [GENOMIC DNA]</scope>
    <source>
        <strain>1033-5P14 / KAY2026</strain>
    </source>
</reference>
<reference key="2">
    <citation type="journal article" date="2001" name="J. Biol. Chem.">
        <title>Metabolism of sucrose and its five linkage-isomeric alpha-D-glucosyl-D-fructoses by Klebsiella pneumoniae. Participation and properties of sucrose-6-phosphate hydrolase and phospho-alpha-glucosidase.</title>
        <authorList>
            <person name="Thompson J."/>
            <person name="Robrish S.A."/>
            <person name="Immel S."/>
            <person name="Lichtenthaler F.W."/>
            <person name="Hall B.G."/>
            <person name="Pikis A."/>
        </authorList>
    </citation>
    <scope>NUCLEOTIDE SEQUENCE [GENOMIC DNA]</scope>
    <scope>PROTEIN SEQUENCE OF 2-29</scope>
    <scope>MASS SPECTROMETRY</scope>
    <source>
        <strain>ATCC 23357 / A-11</strain>
    </source>
</reference>
<reference key="3">
    <citation type="journal article" date="1993" name="Mol. Microbiol.">
        <title>Molecular analysis of two ScrR repressors and of a ScrR-FruR hybrid repressor for sucrose and D-fructose specific regulons from enteric bacteria.</title>
        <authorList>
            <person name="Jahreis K."/>
            <person name="Lengeler J.W."/>
        </authorList>
    </citation>
    <scope>NUCLEOTIDE SEQUENCE [GENOMIC DNA] OF 316-466</scope>
    <source>
        <strain>1033-5P14 / KAY2026</strain>
    </source>
</reference>
<dbReference type="EC" id="3.2.1.26"/>
<dbReference type="EMBL" id="X57401">
    <property type="protein sequence ID" value="CAA40659.1"/>
    <property type="molecule type" value="Genomic_DNA"/>
</dbReference>
<dbReference type="EMBL" id="X67751">
    <property type="protein sequence ID" value="CAA47976.1"/>
    <property type="molecule type" value="Genomic_DNA"/>
</dbReference>
<dbReference type="PIR" id="S62332">
    <property type="entry name" value="S62332"/>
</dbReference>
<dbReference type="RefSeq" id="WP_004191473.1">
    <property type="nucleotide sequence ID" value="NZ_WVVY01000005.1"/>
</dbReference>
<dbReference type="SMR" id="P27217"/>
<dbReference type="CAZy" id="GH32">
    <property type="family name" value="Glycoside Hydrolase Family 32"/>
</dbReference>
<dbReference type="BioCyc" id="MetaCyc:MONOMER-12621"/>
<dbReference type="BRENDA" id="3.2.1.B3">
    <property type="organism ID" value="2814"/>
</dbReference>
<dbReference type="SABIO-RK" id="P27217"/>
<dbReference type="UniPathway" id="UPA00238"/>
<dbReference type="GO" id="GO:0005737">
    <property type="term" value="C:cytoplasm"/>
    <property type="evidence" value="ECO:0007669"/>
    <property type="project" value="UniProtKB-SubCell"/>
</dbReference>
<dbReference type="GO" id="GO:0004564">
    <property type="term" value="F:beta-fructofuranosidase activity"/>
    <property type="evidence" value="ECO:0007669"/>
    <property type="project" value="UniProtKB-EC"/>
</dbReference>
<dbReference type="GO" id="GO:0005985">
    <property type="term" value="P:sucrose metabolic process"/>
    <property type="evidence" value="ECO:0007669"/>
    <property type="project" value="UniProtKB-UniPathway"/>
</dbReference>
<dbReference type="CDD" id="cd18623">
    <property type="entry name" value="GH32_ScrB-like"/>
    <property type="match status" value="1"/>
</dbReference>
<dbReference type="Gene3D" id="2.60.120.560">
    <property type="entry name" value="Exo-inulinase, domain 1"/>
    <property type="match status" value="1"/>
</dbReference>
<dbReference type="Gene3D" id="2.115.10.20">
    <property type="entry name" value="Glycosyl hydrolase domain, family 43"/>
    <property type="match status" value="1"/>
</dbReference>
<dbReference type="InterPro" id="IPR013320">
    <property type="entry name" value="ConA-like_dom_sf"/>
</dbReference>
<dbReference type="InterPro" id="IPR051214">
    <property type="entry name" value="GH32_Enzymes"/>
</dbReference>
<dbReference type="InterPro" id="IPR001362">
    <property type="entry name" value="Glyco_hydro_32"/>
</dbReference>
<dbReference type="InterPro" id="IPR018053">
    <property type="entry name" value="Glyco_hydro_32_AS"/>
</dbReference>
<dbReference type="InterPro" id="IPR013189">
    <property type="entry name" value="Glyco_hydro_32_C"/>
</dbReference>
<dbReference type="InterPro" id="IPR013148">
    <property type="entry name" value="Glyco_hydro_32_N"/>
</dbReference>
<dbReference type="InterPro" id="IPR023296">
    <property type="entry name" value="Glyco_hydro_beta-prop_sf"/>
</dbReference>
<dbReference type="InterPro" id="IPR006232">
    <property type="entry name" value="Suc6P_hydrolase"/>
</dbReference>
<dbReference type="NCBIfam" id="TIGR01322">
    <property type="entry name" value="scrB_fam"/>
    <property type="match status" value="1"/>
</dbReference>
<dbReference type="PANTHER" id="PTHR43101">
    <property type="entry name" value="BETA-FRUCTOSIDASE"/>
    <property type="match status" value="1"/>
</dbReference>
<dbReference type="PANTHER" id="PTHR43101:SF1">
    <property type="entry name" value="BETA-FRUCTOSIDASE"/>
    <property type="match status" value="1"/>
</dbReference>
<dbReference type="Pfam" id="PF08244">
    <property type="entry name" value="Glyco_hydro_32C"/>
    <property type="match status" value="1"/>
</dbReference>
<dbReference type="Pfam" id="PF00251">
    <property type="entry name" value="Glyco_hydro_32N"/>
    <property type="match status" value="1"/>
</dbReference>
<dbReference type="SMART" id="SM00640">
    <property type="entry name" value="Glyco_32"/>
    <property type="match status" value="1"/>
</dbReference>
<dbReference type="SUPFAM" id="SSF75005">
    <property type="entry name" value="Arabinanase/levansucrase/invertase"/>
    <property type="match status" value="1"/>
</dbReference>
<dbReference type="SUPFAM" id="SSF49899">
    <property type="entry name" value="Concanavalin A-like lectins/glucanases"/>
    <property type="match status" value="1"/>
</dbReference>
<dbReference type="PROSITE" id="PS00609">
    <property type="entry name" value="GLYCOSYL_HYDROL_F32"/>
    <property type="match status" value="1"/>
</dbReference>
<comment type="function">
    <text>Hydrolyzes sucrose and sucrose-6P, but fails to hydrolyze any of the phosphorylated isomers of sucrose and other phospho-D-glucosides, including maltose-6'P and trehalose-6P.</text>
</comment>
<comment type="catalytic activity">
    <reaction evidence="2">
        <text>Hydrolysis of terminal non-reducing beta-D-fructofuranoside residues in beta-D-fructofuranosides.</text>
        <dbReference type="EC" id="3.2.1.26"/>
    </reaction>
</comment>
<comment type="pathway">
    <text>Glycan biosynthesis; sucrose metabolism.</text>
</comment>
<comment type="subcellular location">
    <subcellularLocation>
        <location>Cytoplasm</location>
    </subcellularLocation>
</comment>
<comment type="mass spectrometry" mass="52581.0" method="Electrospray" evidence="3"/>
<comment type="similarity">
    <text evidence="4">Belongs to the glycosyl hydrolase 32 family.</text>
</comment>
<proteinExistence type="evidence at protein level"/>
<organism>
    <name type="scientific">Klebsiella pneumoniae</name>
    <dbReference type="NCBI Taxonomy" id="573"/>
    <lineage>
        <taxon>Bacteria</taxon>
        <taxon>Pseudomonadati</taxon>
        <taxon>Pseudomonadota</taxon>
        <taxon>Gammaproteobacteria</taxon>
        <taxon>Enterobacterales</taxon>
        <taxon>Enterobacteriaceae</taxon>
        <taxon>Klebsiella/Raoultella group</taxon>
        <taxon>Klebsiella</taxon>
        <taxon>Klebsiella pneumoniae complex</taxon>
    </lineage>
</organism>
<accession>P27217</accession>
<sequence length="466" mass="52708">MSLPSRLPAILQAVMQGQPQALADSHYPQWHLAPVNGLLNDPNGFCQVAGRYHLFYQWNPLACDHTYKCWGHWSSADLLHWRHEPIALMPDEEYDRNGCYSGSAVEFEGALTLCYTGNVKFPDGGRTAWQCLATENADGTFRKLGPVLPLPEGYTGHVRDPKVWRQDGRWYMVLGAQDVQQRGKVLLFTASDLREWRLVGEIAGHDVNGLANAGYMWECPDLFPLADTHLLICCPQGLAREAQRFLNTYPAVWMAGRFDAERGIFDHGPLHELDSGFEFYAPQTMQADDGRRLLVGWMGVPDGDEMHQPTRAQGWIHQMTCVRELEWQAGTLYQRPLRELVALRGEAQGWCGQTLPLAPMELAFDLSPDSTLGLDFAGALQLTVNRDGLRLSRRGLQTAEMHHRYWRGEARRLRIFIDRSSVEIFINDGEGVMSSRFFPGYPGQLIFSGATPVAFCRWLLRPCMVE</sequence>
<name>SCRB_KLEPN</name>
<evidence type="ECO:0000250" key="1"/>
<evidence type="ECO:0000255" key="2">
    <source>
        <dbReference type="PROSITE-ProRule" id="PRU10067"/>
    </source>
</evidence>
<evidence type="ECO:0000269" key="3">
    <source>
    </source>
</evidence>
<evidence type="ECO:0000305" key="4"/>
<gene>
    <name type="primary">scrB</name>
</gene>